<protein>
    <recommendedName>
        <fullName evidence="1">Large ribosomal subunit protein bL20</fullName>
    </recommendedName>
    <alternativeName>
        <fullName evidence="2">50S ribosomal protein L20</fullName>
    </alternativeName>
</protein>
<feature type="chain" id="PRO_1000049022" description="Large ribosomal subunit protein bL20">
    <location>
        <begin position="1"/>
        <end position="119"/>
    </location>
</feature>
<reference key="1">
    <citation type="submission" date="2006-03" db="EMBL/GenBank/DDBJ databases">
        <title>Complete sequence of chromosome of Nitrobacter hamburgensis X14.</title>
        <authorList>
            <consortium name="US DOE Joint Genome Institute"/>
            <person name="Copeland A."/>
            <person name="Lucas S."/>
            <person name="Lapidus A."/>
            <person name="Barry K."/>
            <person name="Detter J.C."/>
            <person name="Glavina del Rio T."/>
            <person name="Hammon N."/>
            <person name="Israni S."/>
            <person name="Dalin E."/>
            <person name="Tice H."/>
            <person name="Pitluck S."/>
            <person name="Chain P."/>
            <person name="Malfatti S."/>
            <person name="Shin M."/>
            <person name="Vergez L."/>
            <person name="Schmutz J."/>
            <person name="Larimer F."/>
            <person name="Land M."/>
            <person name="Hauser L."/>
            <person name="Kyrpides N."/>
            <person name="Ivanova N."/>
            <person name="Ward B."/>
            <person name="Arp D."/>
            <person name="Klotz M."/>
            <person name="Stein L."/>
            <person name="O'Mullan G."/>
            <person name="Starkenburg S."/>
            <person name="Sayavedra L."/>
            <person name="Poret-Peterson A.T."/>
            <person name="Gentry M.E."/>
            <person name="Bruce D."/>
            <person name="Richardson P."/>
        </authorList>
    </citation>
    <scope>NUCLEOTIDE SEQUENCE [LARGE SCALE GENOMIC DNA]</scope>
    <source>
        <strain>DSM 10229 / NCIMB 13809 / X14</strain>
    </source>
</reference>
<name>RL20_NITHX</name>
<proteinExistence type="inferred from homology"/>
<accession>Q1QS21</accession>
<sequence>MARVKRGVTAHAKHKKVYKITKGFSGRRKNTIRAAKAAADKAGQYAFRDRKRKKRTFRALWIQRLNAAVRPFGMTYSVFINGLSKSGITVDRKVLSDLAINEPAAFQAIAEKAKAALAA</sequence>
<evidence type="ECO:0000255" key="1">
    <source>
        <dbReference type="HAMAP-Rule" id="MF_00382"/>
    </source>
</evidence>
<evidence type="ECO:0000305" key="2"/>
<keyword id="KW-1185">Reference proteome</keyword>
<keyword id="KW-0687">Ribonucleoprotein</keyword>
<keyword id="KW-0689">Ribosomal protein</keyword>
<keyword id="KW-0694">RNA-binding</keyword>
<keyword id="KW-0699">rRNA-binding</keyword>
<organism>
    <name type="scientific">Nitrobacter hamburgensis (strain DSM 10229 / NCIMB 13809 / X14)</name>
    <dbReference type="NCBI Taxonomy" id="323097"/>
    <lineage>
        <taxon>Bacteria</taxon>
        <taxon>Pseudomonadati</taxon>
        <taxon>Pseudomonadota</taxon>
        <taxon>Alphaproteobacteria</taxon>
        <taxon>Hyphomicrobiales</taxon>
        <taxon>Nitrobacteraceae</taxon>
        <taxon>Nitrobacter</taxon>
    </lineage>
</organism>
<dbReference type="EMBL" id="CP000319">
    <property type="protein sequence ID" value="ABE60976.1"/>
    <property type="molecule type" value="Genomic_DNA"/>
</dbReference>
<dbReference type="RefSeq" id="WP_011508683.1">
    <property type="nucleotide sequence ID" value="NC_007964.1"/>
</dbReference>
<dbReference type="SMR" id="Q1QS21"/>
<dbReference type="STRING" id="323097.Nham_0075"/>
<dbReference type="KEGG" id="nha:Nham_0075"/>
<dbReference type="eggNOG" id="COG0292">
    <property type="taxonomic scope" value="Bacteria"/>
</dbReference>
<dbReference type="HOGENOM" id="CLU_123265_0_1_5"/>
<dbReference type="OrthoDB" id="9808966at2"/>
<dbReference type="Proteomes" id="UP000001953">
    <property type="component" value="Chromosome"/>
</dbReference>
<dbReference type="GO" id="GO:1990904">
    <property type="term" value="C:ribonucleoprotein complex"/>
    <property type="evidence" value="ECO:0007669"/>
    <property type="project" value="UniProtKB-KW"/>
</dbReference>
<dbReference type="GO" id="GO:0005840">
    <property type="term" value="C:ribosome"/>
    <property type="evidence" value="ECO:0007669"/>
    <property type="project" value="UniProtKB-KW"/>
</dbReference>
<dbReference type="GO" id="GO:0019843">
    <property type="term" value="F:rRNA binding"/>
    <property type="evidence" value="ECO:0007669"/>
    <property type="project" value="UniProtKB-UniRule"/>
</dbReference>
<dbReference type="GO" id="GO:0003735">
    <property type="term" value="F:structural constituent of ribosome"/>
    <property type="evidence" value="ECO:0007669"/>
    <property type="project" value="InterPro"/>
</dbReference>
<dbReference type="GO" id="GO:0000027">
    <property type="term" value="P:ribosomal large subunit assembly"/>
    <property type="evidence" value="ECO:0007669"/>
    <property type="project" value="UniProtKB-UniRule"/>
</dbReference>
<dbReference type="GO" id="GO:0006412">
    <property type="term" value="P:translation"/>
    <property type="evidence" value="ECO:0007669"/>
    <property type="project" value="InterPro"/>
</dbReference>
<dbReference type="CDD" id="cd07026">
    <property type="entry name" value="Ribosomal_L20"/>
    <property type="match status" value="1"/>
</dbReference>
<dbReference type="FunFam" id="1.10.1900.20:FF:000001">
    <property type="entry name" value="50S ribosomal protein L20"/>
    <property type="match status" value="1"/>
</dbReference>
<dbReference type="Gene3D" id="6.10.160.10">
    <property type="match status" value="1"/>
</dbReference>
<dbReference type="Gene3D" id="1.10.1900.20">
    <property type="entry name" value="Ribosomal protein L20"/>
    <property type="match status" value="1"/>
</dbReference>
<dbReference type="HAMAP" id="MF_00382">
    <property type="entry name" value="Ribosomal_bL20"/>
    <property type="match status" value="1"/>
</dbReference>
<dbReference type="InterPro" id="IPR005813">
    <property type="entry name" value="Ribosomal_bL20"/>
</dbReference>
<dbReference type="InterPro" id="IPR049946">
    <property type="entry name" value="RIBOSOMAL_L20_CS"/>
</dbReference>
<dbReference type="InterPro" id="IPR035566">
    <property type="entry name" value="Ribosomal_protein_bL20_C"/>
</dbReference>
<dbReference type="NCBIfam" id="TIGR01032">
    <property type="entry name" value="rplT_bact"/>
    <property type="match status" value="1"/>
</dbReference>
<dbReference type="PANTHER" id="PTHR10986">
    <property type="entry name" value="39S RIBOSOMAL PROTEIN L20"/>
    <property type="match status" value="1"/>
</dbReference>
<dbReference type="Pfam" id="PF00453">
    <property type="entry name" value="Ribosomal_L20"/>
    <property type="match status" value="1"/>
</dbReference>
<dbReference type="PRINTS" id="PR00062">
    <property type="entry name" value="RIBOSOMALL20"/>
</dbReference>
<dbReference type="SUPFAM" id="SSF74731">
    <property type="entry name" value="Ribosomal protein L20"/>
    <property type="match status" value="1"/>
</dbReference>
<dbReference type="PROSITE" id="PS00937">
    <property type="entry name" value="RIBOSOMAL_L20"/>
    <property type="match status" value="1"/>
</dbReference>
<gene>
    <name evidence="1" type="primary">rplT</name>
    <name type="ordered locus">Nham_0075</name>
</gene>
<comment type="function">
    <text evidence="1">Binds directly to 23S ribosomal RNA and is necessary for the in vitro assembly process of the 50S ribosomal subunit. It is not involved in the protein synthesizing functions of that subunit.</text>
</comment>
<comment type="similarity">
    <text evidence="1">Belongs to the bacterial ribosomal protein bL20 family.</text>
</comment>